<dbReference type="EMBL" id="AK075450">
    <property type="protein sequence ID" value="BAC11628.1"/>
    <property type="molecule type" value="mRNA"/>
</dbReference>
<dbReference type="EMBL" id="AK122669">
    <property type="protein sequence ID" value="BAG53655.1"/>
    <property type="molecule type" value="mRNA"/>
</dbReference>
<dbReference type="EMBL" id="CH471076">
    <property type="protein sequence ID" value="EAW74730.1"/>
    <property type="molecule type" value="Genomic_DNA"/>
</dbReference>
<dbReference type="EMBL" id="BC016964">
    <property type="protein sequence ID" value="AAH16964.1"/>
    <property type="molecule type" value="mRNA"/>
</dbReference>
<dbReference type="CCDS" id="CCDS8188.1"/>
<dbReference type="RefSeq" id="NP_001091985.1">
    <property type="nucleotide sequence ID" value="NM_001098515.2"/>
</dbReference>
<dbReference type="RefSeq" id="NP_659452.3">
    <property type="nucleotide sequence ID" value="NM_145015.4"/>
</dbReference>
<dbReference type="RefSeq" id="XP_016872659.1">
    <property type="nucleotide sequence ID" value="XM_017017170.2"/>
</dbReference>
<dbReference type="RefSeq" id="XP_024304107.1">
    <property type="nucleotide sequence ID" value="XM_024448339.2"/>
</dbReference>
<dbReference type="RefSeq" id="XP_054223581.1">
    <property type="nucleotide sequence ID" value="XM_054367606.1"/>
</dbReference>
<dbReference type="RefSeq" id="XP_054223582.1">
    <property type="nucleotide sequence ID" value="XM_054367607.1"/>
</dbReference>
<dbReference type="SMR" id="Q96AM1"/>
<dbReference type="BioGRID" id="125520">
    <property type="interactions" value="3"/>
</dbReference>
<dbReference type="FunCoup" id="Q96AM1">
    <property type="interactions" value="75"/>
</dbReference>
<dbReference type="IntAct" id="Q96AM1">
    <property type="interactions" value="4"/>
</dbReference>
<dbReference type="MINT" id="Q96AM1"/>
<dbReference type="STRING" id="9606.ENSP00000403660"/>
<dbReference type="ChEMBL" id="CHEMBL4523903"/>
<dbReference type="TCDB" id="9.A.14.13.7">
    <property type="family name" value="the g-protein-coupled receptor (gpcr) family"/>
</dbReference>
<dbReference type="GlyCosmos" id="Q96AM1">
    <property type="glycosylation" value="1 site, No reported glycans"/>
</dbReference>
<dbReference type="GlyGen" id="Q96AM1">
    <property type="glycosylation" value="1 site"/>
</dbReference>
<dbReference type="iPTMnet" id="Q96AM1"/>
<dbReference type="PhosphoSitePlus" id="Q96AM1"/>
<dbReference type="BioMuta" id="MRGPRF"/>
<dbReference type="DMDM" id="24638055"/>
<dbReference type="jPOST" id="Q96AM1"/>
<dbReference type="MassIVE" id="Q96AM1"/>
<dbReference type="PaxDb" id="9606-ENSP00000309782"/>
<dbReference type="PeptideAtlas" id="Q96AM1"/>
<dbReference type="ProteomicsDB" id="75974"/>
<dbReference type="Antibodypedia" id="16748">
    <property type="antibodies" value="275 antibodies from 30 providers"/>
</dbReference>
<dbReference type="DNASU" id="116535"/>
<dbReference type="Ensembl" id="ENST00000309099.7">
    <property type="protein sequence ID" value="ENSP00000309782.6"/>
    <property type="gene ID" value="ENSG00000172935.10"/>
</dbReference>
<dbReference type="GeneID" id="116535"/>
<dbReference type="KEGG" id="hsa:116535"/>
<dbReference type="MANE-Select" id="ENST00000309099.7">
    <property type="protein sequence ID" value="ENSP00000309782.6"/>
    <property type="RefSeq nucleotide sequence ID" value="NM_145015.5"/>
    <property type="RefSeq protein sequence ID" value="NP_659452.3"/>
</dbReference>
<dbReference type="UCSC" id="uc001ooo.5">
    <property type="organism name" value="human"/>
</dbReference>
<dbReference type="AGR" id="HGNC:24828"/>
<dbReference type="CTD" id="116535"/>
<dbReference type="DisGeNET" id="116535"/>
<dbReference type="GeneCards" id="MRGPRF"/>
<dbReference type="HGNC" id="HGNC:24828">
    <property type="gene designation" value="MRGPRF"/>
</dbReference>
<dbReference type="HPA" id="ENSG00000172935">
    <property type="expression patterns" value="Tissue enhanced (endometrium, intestine)"/>
</dbReference>
<dbReference type="MIM" id="607233">
    <property type="type" value="gene"/>
</dbReference>
<dbReference type="neXtProt" id="NX_Q96AM1"/>
<dbReference type="OpenTargets" id="ENSG00000172935"/>
<dbReference type="PharmGKB" id="PA134896544"/>
<dbReference type="VEuPathDB" id="HostDB:ENSG00000172935"/>
<dbReference type="eggNOG" id="ENOG502SIXZ">
    <property type="taxonomic scope" value="Eukaryota"/>
</dbReference>
<dbReference type="GeneTree" id="ENSGT01030000234639"/>
<dbReference type="HOGENOM" id="CLU_009579_4_1_1"/>
<dbReference type="InParanoid" id="Q96AM1"/>
<dbReference type="OMA" id="RILGLCM"/>
<dbReference type="OrthoDB" id="9896011at2759"/>
<dbReference type="PAN-GO" id="Q96AM1">
    <property type="GO annotations" value="2 GO annotations based on evolutionary models"/>
</dbReference>
<dbReference type="PhylomeDB" id="Q96AM1"/>
<dbReference type="TreeFam" id="TF336336"/>
<dbReference type="PathwayCommons" id="Q96AM1"/>
<dbReference type="SignaLink" id="Q96AM1"/>
<dbReference type="BioGRID-ORCS" id="116535">
    <property type="hits" value="18 hits in 1144 CRISPR screens"/>
</dbReference>
<dbReference type="ChiTaRS" id="MRGPRF">
    <property type="organism name" value="human"/>
</dbReference>
<dbReference type="GeneWiki" id="MRGPRF"/>
<dbReference type="GenomeRNAi" id="116535"/>
<dbReference type="Pharos" id="Q96AM1">
    <property type="development level" value="Tbio"/>
</dbReference>
<dbReference type="PRO" id="PR:Q96AM1"/>
<dbReference type="Proteomes" id="UP000005640">
    <property type="component" value="Chromosome 11"/>
</dbReference>
<dbReference type="RNAct" id="Q96AM1">
    <property type="molecule type" value="protein"/>
</dbReference>
<dbReference type="Bgee" id="ENSG00000172935">
    <property type="expression patterns" value="Expressed in mucosa of stomach and 152 other cell types or tissues"/>
</dbReference>
<dbReference type="ExpressionAtlas" id="Q96AM1">
    <property type="expression patterns" value="baseline and differential"/>
</dbReference>
<dbReference type="GO" id="GO:0031965">
    <property type="term" value="C:nuclear membrane"/>
    <property type="evidence" value="ECO:0000314"/>
    <property type="project" value="HPA"/>
</dbReference>
<dbReference type="GO" id="GO:0005654">
    <property type="term" value="C:nucleoplasm"/>
    <property type="evidence" value="ECO:0000314"/>
    <property type="project" value="HPA"/>
</dbReference>
<dbReference type="GO" id="GO:0005886">
    <property type="term" value="C:plasma membrane"/>
    <property type="evidence" value="ECO:0000314"/>
    <property type="project" value="HPA"/>
</dbReference>
<dbReference type="GO" id="GO:0004930">
    <property type="term" value="F:G protein-coupled receptor activity"/>
    <property type="evidence" value="ECO:0000318"/>
    <property type="project" value="GO_Central"/>
</dbReference>
<dbReference type="GO" id="GO:0007186">
    <property type="term" value="P:G protein-coupled receptor signaling pathway"/>
    <property type="evidence" value="ECO:0000318"/>
    <property type="project" value="GO_Central"/>
</dbReference>
<dbReference type="CDD" id="cd15109">
    <property type="entry name" value="7tmA_MrgprF"/>
    <property type="match status" value="1"/>
</dbReference>
<dbReference type="FunFam" id="1.20.1070.10:FF:000235">
    <property type="entry name" value="mas-related G-protein coupled receptor member F"/>
    <property type="match status" value="1"/>
</dbReference>
<dbReference type="Gene3D" id="1.20.1070.10">
    <property type="entry name" value="Rhodopsin 7-helix transmembrane proteins"/>
    <property type="match status" value="1"/>
</dbReference>
<dbReference type="InterPro" id="IPR000276">
    <property type="entry name" value="GPCR_Rhodpsn"/>
</dbReference>
<dbReference type="InterPro" id="IPR017452">
    <property type="entry name" value="GPCR_Rhodpsn_7TM"/>
</dbReference>
<dbReference type="InterPro" id="IPR026228">
    <property type="entry name" value="MRGPCRF"/>
</dbReference>
<dbReference type="InterPro" id="IPR026234">
    <property type="entry name" value="MRGPCRFAMILY"/>
</dbReference>
<dbReference type="PANTHER" id="PTHR11334">
    <property type="entry name" value="MAS-RELATED G-PROTEIN COUPLED RECEPTOR"/>
    <property type="match status" value="1"/>
</dbReference>
<dbReference type="PANTHER" id="PTHR11334:SF3">
    <property type="entry name" value="MAS-RELATED G-PROTEIN COUPLED RECEPTOR MEMBER F"/>
    <property type="match status" value="1"/>
</dbReference>
<dbReference type="Pfam" id="PF00001">
    <property type="entry name" value="7tm_1"/>
    <property type="match status" value="1"/>
</dbReference>
<dbReference type="PRINTS" id="PR00237">
    <property type="entry name" value="GPCRRHODOPSN"/>
</dbReference>
<dbReference type="PRINTS" id="PR02112">
    <property type="entry name" value="MRGPCRF"/>
</dbReference>
<dbReference type="PRINTS" id="PR02108">
    <property type="entry name" value="MRGPCRFAMILY"/>
</dbReference>
<dbReference type="SUPFAM" id="SSF81321">
    <property type="entry name" value="Family A G protein-coupled receptor-like"/>
    <property type="match status" value="1"/>
</dbReference>
<dbReference type="PROSITE" id="PS00237">
    <property type="entry name" value="G_PROTEIN_RECEP_F1_1"/>
    <property type="match status" value="1"/>
</dbReference>
<dbReference type="PROSITE" id="PS50262">
    <property type="entry name" value="G_PROTEIN_RECEP_F1_2"/>
    <property type="match status" value="1"/>
</dbReference>
<comment type="function">
    <text evidence="1">Orphan receptor. May bind to a neuropeptide and may regulate nociceptor function and/or development, including the sensation or modulation of pain (By similarity).</text>
</comment>
<comment type="subcellular location">
    <subcellularLocation>
        <location>Cell membrane</location>
        <topology>Multi-pass membrane protein</topology>
    </subcellularLocation>
</comment>
<comment type="similarity">
    <text evidence="3">Belongs to the G-protein coupled receptor 1 family. Mas subfamily.</text>
</comment>
<sequence>MAGNCSWEAHPGNRNKMCPGLSEAPELYSRGFLTIEQIAMLPPPAVMNYIFLLLCLCGLVGNGLVLWFFGFSIKRNPFSIYFLHLASADVGYLFSKAVFSILNTGGFLGTFADYIRSVCRVLGLCMFLTGVSLLPAVSAERCASVIFPAWYWRRRPKRLSAVVCALLWVLSLLVTCLHNYFCVFLGRGAPGAACRHMDIFLGILLFLLCCPLMVLPCLALILHVECRARRRQRSAKLNHVILAMVSVFLVSSIYLGIDWFLFWVFQIPAPFPEYVTDLCICINSSAKPIVYFLAGRDKSQRLWEPLRVVFQRALRDGAELGEAGGSTPNTVTMEMQCPPGNAS</sequence>
<name>MRGRF_HUMAN</name>
<accession>Q96AM1</accession>
<accession>B3KV43</accession>
<accession>Q8NBK8</accession>
<protein>
    <recommendedName>
        <fullName>Mas-related G-protein coupled receptor member F</fullName>
        <shortName>Mas-related gene F protein</shortName>
    </recommendedName>
    <alternativeName>
        <fullName>G-protein coupled receptor 140</fullName>
    </alternativeName>
    <alternativeName>
        <fullName>G-protein coupled receptor 168</fullName>
    </alternativeName>
</protein>
<keyword id="KW-1003">Cell membrane</keyword>
<keyword id="KW-0297">G-protein coupled receptor</keyword>
<keyword id="KW-0325">Glycoprotein</keyword>
<keyword id="KW-0472">Membrane</keyword>
<keyword id="KW-1267">Proteomics identification</keyword>
<keyword id="KW-0675">Receptor</keyword>
<keyword id="KW-1185">Reference proteome</keyword>
<keyword id="KW-0807">Transducer</keyword>
<keyword id="KW-0812">Transmembrane</keyword>
<keyword id="KW-1133">Transmembrane helix</keyword>
<evidence type="ECO:0000250" key="1"/>
<evidence type="ECO:0000255" key="2"/>
<evidence type="ECO:0000255" key="3">
    <source>
        <dbReference type="PROSITE-ProRule" id="PRU00521"/>
    </source>
</evidence>
<evidence type="ECO:0000256" key="4">
    <source>
        <dbReference type="SAM" id="MobiDB-lite"/>
    </source>
</evidence>
<evidence type="ECO:0000269" key="5">
    <source>
    </source>
</evidence>
<proteinExistence type="evidence at protein level"/>
<organism>
    <name type="scientific">Homo sapiens</name>
    <name type="common">Human</name>
    <dbReference type="NCBI Taxonomy" id="9606"/>
    <lineage>
        <taxon>Eukaryota</taxon>
        <taxon>Metazoa</taxon>
        <taxon>Chordata</taxon>
        <taxon>Craniata</taxon>
        <taxon>Vertebrata</taxon>
        <taxon>Euteleostomi</taxon>
        <taxon>Mammalia</taxon>
        <taxon>Eutheria</taxon>
        <taxon>Euarchontoglires</taxon>
        <taxon>Primates</taxon>
        <taxon>Haplorrhini</taxon>
        <taxon>Catarrhini</taxon>
        <taxon>Hominidae</taxon>
        <taxon>Homo</taxon>
    </lineage>
</organism>
<gene>
    <name type="primary">MRGPRF</name>
    <name type="synonym">GPR140</name>
    <name type="synonym">GPR168</name>
    <name type="synonym">MRGF</name>
    <name type="ORF">PSEC0142</name>
</gene>
<reference key="1">
    <citation type="journal article" date="2004" name="Nat. Genet.">
        <title>Complete sequencing and characterization of 21,243 full-length human cDNAs.</title>
        <authorList>
            <person name="Ota T."/>
            <person name="Suzuki Y."/>
            <person name="Nishikawa T."/>
            <person name="Otsuki T."/>
            <person name="Sugiyama T."/>
            <person name="Irie R."/>
            <person name="Wakamatsu A."/>
            <person name="Hayashi K."/>
            <person name="Sato H."/>
            <person name="Nagai K."/>
            <person name="Kimura K."/>
            <person name="Makita H."/>
            <person name="Sekine M."/>
            <person name="Obayashi M."/>
            <person name="Nishi T."/>
            <person name="Shibahara T."/>
            <person name="Tanaka T."/>
            <person name="Ishii S."/>
            <person name="Yamamoto J."/>
            <person name="Saito K."/>
            <person name="Kawai Y."/>
            <person name="Isono Y."/>
            <person name="Nakamura Y."/>
            <person name="Nagahari K."/>
            <person name="Murakami K."/>
            <person name="Yasuda T."/>
            <person name="Iwayanagi T."/>
            <person name="Wagatsuma M."/>
            <person name="Shiratori A."/>
            <person name="Sudo H."/>
            <person name="Hosoiri T."/>
            <person name="Kaku Y."/>
            <person name="Kodaira H."/>
            <person name="Kondo H."/>
            <person name="Sugawara M."/>
            <person name="Takahashi M."/>
            <person name="Kanda K."/>
            <person name="Yokoi T."/>
            <person name="Furuya T."/>
            <person name="Kikkawa E."/>
            <person name="Omura Y."/>
            <person name="Abe K."/>
            <person name="Kamihara K."/>
            <person name="Katsuta N."/>
            <person name="Sato K."/>
            <person name="Tanikawa M."/>
            <person name="Yamazaki M."/>
            <person name="Ninomiya K."/>
            <person name="Ishibashi T."/>
            <person name="Yamashita H."/>
            <person name="Murakawa K."/>
            <person name="Fujimori K."/>
            <person name="Tanai H."/>
            <person name="Kimata M."/>
            <person name="Watanabe M."/>
            <person name="Hiraoka S."/>
            <person name="Chiba Y."/>
            <person name="Ishida S."/>
            <person name="Ono Y."/>
            <person name="Takiguchi S."/>
            <person name="Watanabe S."/>
            <person name="Yosida M."/>
            <person name="Hotuta T."/>
            <person name="Kusano J."/>
            <person name="Kanehori K."/>
            <person name="Takahashi-Fujii A."/>
            <person name="Hara H."/>
            <person name="Tanase T.-O."/>
            <person name="Nomura Y."/>
            <person name="Togiya S."/>
            <person name="Komai F."/>
            <person name="Hara R."/>
            <person name="Takeuchi K."/>
            <person name="Arita M."/>
            <person name="Imose N."/>
            <person name="Musashino K."/>
            <person name="Yuuki H."/>
            <person name="Oshima A."/>
            <person name="Sasaki N."/>
            <person name="Aotsuka S."/>
            <person name="Yoshikawa Y."/>
            <person name="Matsunawa H."/>
            <person name="Ichihara T."/>
            <person name="Shiohata N."/>
            <person name="Sano S."/>
            <person name="Moriya S."/>
            <person name="Momiyama H."/>
            <person name="Satoh N."/>
            <person name="Takami S."/>
            <person name="Terashima Y."/>
            <person name="Suzuki O."/>
            <person name="Nakagawa S."/>
            <person name="Senoh A."/>
            <person name="Mizoguchi H."/>
            <person name="Goto Y."/>
            <person name="Shimizu F."/>
            <person name="Wakebe H."/>
            <person name="Hishigaki H."/>
            <person name="Watanabe T."/>
            <person name="Sugiyama A."/>
            <person name="Takemoto M."/>
            <person name="Kawakami B."/>
            <person name="Yamazaki M."/>
            <person name="Watanabe K."/>
            <person name="Kumagai A."/>
            <person name="Itakura S."/>
            <person name="Fukuzumi Y."/>
            <person name="Fujimori Y."/>
            <person name="Komiyama M."/>
            <person name="Tashiro H."/>
            <person name="Tanigami A."/>
            <person name="Fujiwara T."/>
            <person name="Ono T."/>
            <person name="Yamada K."/>
            <person name="Fujii Y."/>
            <person name="Ozaki K."/>
            <person name="Hirao M."/>
            <person name="Ohmori Y."/>
            <person name="Kawabata A."/>
            <person name="Hikiji T."/>
            <person name="Kobatake N."/>
            <person name="Inagaki H."/>
            <person name="Ikema Y."/>
            <person name="Okamoto S."/>
            <person name="Okitani R."/>
            <person name="Kawakami T."/>
            <person name="Noguchi S."/>
            <person name="Itoh T."/>
            <person name="Shigeta K."/>
            <person name="Senba T."/>
            <person name="Matsumura K."/>
            <person name="Nakajima Y."/>
            <person name="Mizuno T."/>
            <person name="Morinaga M."/>
            <person name="Sasaki M."/>
            <person name="Togashi T."/>
            <person name="Oyama M."/>
            <person name="Hata H."/>
            <person name="Watanabe M."/>
            <person name="Komatsu T."/>
            <person name="Mizushima-Sugano J."/>
            <person name="Satoh T."/>
            <person name="Shirai Y."/>
            <person name="Takahashi Y."/>
            <person name="Nakagawa K."/>
            <person name="Okumura K."/>
            <person name="Nagase T."/>
            <person name="Nomura N."/>
            <person name="Kikuchi H."/>
            <person name="Masuho Y."/>
            <person name="Yamashita R."/>
            <person name="Nakai K."/>
            <person name="Yada T."/>
            <person name="Nakamura Y."/>
            <person name="Ohara O."/>
            <person name="Isogai T."/>
            <person name="Sugano S."/>
        </authorList>
    </citation>
    <scope>NUCLEOTIDE SEQUENCE [LARGE SCALE MRNA]</scope>
    <source>
        <tissue>Uterus</tissue>
    </source>
</reference>
<reference key="2">
    <citation type="journal article" date="2005" name="DNA Res.">
        <title>Signal sequence and keyword trap in silico for selection of full-length human cDNAs encoding secretion or membrane proteins from oligo-capped cDNA libraries.</title>
        <authorList>
            <person name="Otsuki T."/>
            <person name="Ota T."/>
            <person name="Nishikawa T."/>
            <person name="Hayashi K."/>
            <person name="Suzuki Y."/>
            <person name="Yamamoto J."/>
            <person name="Wakamatsu A."/>
            <person name="Kimura K."/>
            <person name="Sakamoto K."/>
            <person name="Hatano N."/>
            <person name="Kawai Y."/>
            <person name="Ishii S."/>
            <person name="Saito K."/>
            <person name="Kojima S."/>
            <person name="Sugiyama T."/>
            <person name="Ono T."/>
            <person name="Okano K."/>
            <person name="Yoshikawa Y."/>
            <person name="Aotsuka S."/>
            <person name="Sasaki N."/>
            <person name="Hattori A."/>
            <person name="Okumura K."/>
            <person name="Nagai K."/>
            <person name="Sugano S."/>
            <person name="Isogai T."/>
        </authorList>
    </citation>
    <scope>NUCLEOTIDE SEQUENCE [LARGE SCALE MRNA]</scope>
    <scope>VARIANT ARG-16</scope>
    <source>
        <tissue>Placenta</tissue>
    </source>
</reference>
<reference key="3">
    <citation type="submission" date="2005-07" db="EMBL/GenBank/DDBJ databases">
        <authorList>
            <person name="Mural R.J."/>
            <person name="Istrail S."/>
            <person name="Sutton G.G."/>
            <person name="Florea L."/>
            <person name="Halpern A.L."/>
            <person name="Mobarry C.M."/>
            <person name="Lippert R."/>
            <person name="Walenz B."/>
            <person name="Shatkay H."/>
            <person name="Dew I."/>
            <person name="Miller J.R."/>
            <person name="Flanigan M.J."/>
            <person name="Edwards N.J."/>
            <person name="Bolanos R."/>
            <person name="Fasulo D."/>
            <person name="Halldorsson B.V."/>
            <person name="Hannenhalli S."/>
            <person name="Turner R."/>
            <person name="Yooseph S."/>
            <person name="Lu F."/>
            <person name="Nusskern D.R."/>
            <person name="Shue B.C."/>
            <person name="Zheng X.H."/>
            <person name="Zhong F."/>
            <person name="Delcher A.L."/>
            <person name="Huson D.H."/>
            <person name="Kravitz S.A."/>
            <person name="Mouchard L."/>
            <person name="Reinert K."/>
            <person name="Remington K.A."/>
            <person name="Clark A.G."/>
            <person name="Waterman M.S."/>
            <person name="Eichler E.E."/>
            <person name="Adams M.D."/>
            <person name="Hunkapiller M.W."/>
            <person name="Myers E.W."/>
            <person name="Venter J.C."/>
        </authorList>
    </citation>
    <scope>NUCLEOTIDE SEQUENCE [LARGE SCALE GENOMIC DNA]</scope>
</reference>
<reference key="4">
    <citation type="journal article" date="2004" name="Genome Res.">
        <title>The status, quality, and expansion of the NIH full-length cDNA project: the Mammalian Gene Collection (MGC).</title>
        <authorList>
            <consortium name="The MGC Project Team"/>
        </authorList>
    </citation>
    <scope>NUCLEOTIDE SEQUENCE [LARGE SCALE MRNA]</scope>
    <source>
        <tissue>Brain</tissue>
    </source>
</reference>
<feature type="chain" id="PRO_0000069764" description="Mas-related G-protein coupled receptor member F">
    <location>
        <begin position="1"/>
        <end position="343"/>
    </location>
</feature>
<feature type="topological domain" description="Extracellular" evidence="2">
    <location>
        <begin position="1"/>
        <end position="44"/>
    </location>
</feature>
<feature type="transmembrane region" description="Helical; Name=1" evidence="2">
    <location>
        <begin position="45"/>
        <end position="66"/>
    </location>
</feature>
<feature type="topological domain" description="Cytoplasmic" evidence="2">
    <location>
        <begin position="67"/>
        <end position="82"/>
    </location>
</feature>
<feature type="transmembrane region" description="Helical; Name=2" evidence="2">
    <location>
        <begin position="83"/>
        <end position="104"/>
    </location>
</feature>
<feature type="topological domain" description="Extracellular" evidence="2">
    <location>
        <begin position="105"/>
        <end position="123"/>
    </location>
</feature>
<feature type="transmembrane region" description="Helical; Name=3" evidence="2">
    <location>
        <begin position="124"/>
        <end position="144"/>
    </location>
</feature>
<feature type="topological domain" description="Cytoplasmic" evidence="2">
    <location>
        <begin position="145"/>
        <end position="160"/>
    </location>
</feature>
<feature type="transmembrane region" description="Helical; Name=4" evidence="2">
    <location>
        <begin position="161"/>
        <end position="181"/>
    </location>
</feature>
<feature type="topological domain" description="Extracellular" evidence="2">
    <location>
        <begin position="182"/>
        <end position="198"/>
    </location>
</feature>
<feature type="transmembrane region" description="Helical; Name=5" evidence="2">
    <location>
        <begin position="199"/>
        <end position="220"/>
    </location>
</feature>
<feature type="topological domain" description="Cytoplasmic" evidence="2">
    <location>
        <begin position="221"/>
        <end position="241"/>
    </location>
</feature>
<feature type="transmembrane region" description="Helical; Name=6" evidence="2">
    <location>
        <begin position="242"/>
        <end position="263"/>
    </location>
</feature>
<feature type="topological domain" description="Extracellular" evidence="2">
    <location>
        <begin position="264"/>
        <end position="273"/>
    </location>
</feature>
<feature type="transmembrane region" description="Helical; Name=7" evidence="2">
    <location>
        <begin position="274"/>
        <end position="294"/>
    </location>
</feature>
<feature type="topological domain" description="Cytoplasmic" evidence="2">
    <location>
        <begin position="295"/>
        <end position="343"/>
    </location>
</feature>
<feature type="region of interest" description="Disordered" evidence="4">
    <location>
        <begin position="320"/>
        <end position="343"/>
    </location>
</feature>
<feature type="glycosylation site" description="N-linked (GlcNAc...) asparagine" evidence="2">
    <location>
        <position position="4"/>
    </location>
</feature>
<feature type="sequence variant" id="VAR_061220" description="In dbSNP:rs11544721." evidence="5">
    <original>K</original>
    <variation>R</variation>
    <location>
        <position position="16"/>
    </location>
</feature>